<dbReference type="EC" id="2.1.1.186" evidence="1"/>
<dbReference type="EMBL" id="BX571861">
    <property type="protein sequence ID" value="CAE12949.1"/>
    <property type="molecule type" value="Genomic_DNA"/>
</dbReference>
<dbReference type="RefSeq" id="WP_011145030.1">
    <property type="nucleotide sequence ID" value="NC_005126.1"/>
</dbReference>
<dbReference type="SMR" id="Q7N8R4"/>
<dbReference type="STRING" id="243265.plu0654"/>
<dbReference type="GeneID" id="48846942"/>
<dbReference type="KEGG" id="plu:plu0654"/>
<dbReference type="eggNOG" id="COG2933">
    <property type="taxonomic scope" value="Bacteria"/>
</dbReference>
<dbReference type="HOGENOM" id="CLU_043780_0_0_6"/>
<dbReference type="OrthoDB" id="154490at2"/>
<dbReference type="Proteomes" id="UP000002514">
    <property type="component" value="Chromosome"/>
</dbReference>
<dbReference type="GO" id="GO:0005737">
    <property type="term" value="C:cytoplasm"/>
    <property type="evidence" value="ECO:0007669"/>
    <property type="project" value="UniProtKB-SubCell"/>
</dbReference>
<dbReference type="GO" id="GO:0008757">
    <property type="term" value="F:S-adenosylmethionine-dependent methyltransferase activity"/>
    <property type="evidence" value="ECO:0007669"/>
    <property type="project" value="UniProtKB-UniRule"/>
</dbReference>
<dbReference type="GO" id="GO:0032259">
    <property type="term" value="P:methylation"/>
    <property type="evidence" value="ECO:0007669"/>
    <property type="project" value="UniProtKB-KW"/>
</dbReference>
<dbReference type="GO" id="GO:0006364">
    <property type="term" value="P:rRNA processing"/>
    <property type="evidence" value="ECO:0007669"/>
    <property type="project" value="UniProtKB-UniRule"/>
</dbReference>
<dbReference type="Gene3D" id="3.30.2300.20">
    <property type="match status" value="1"/>
</dbReference>
<dbReference type="Gene3D" id="3.30.70.2810">
    <property type="match status" value="1"/>
</dbReference>
<dbReference type="Gene3D" id="3.40.50.150">
    <property type="entry name" value="Vaccinia Virus protein VP39"/>
    <property type="match status" value="1"/>
</dbReference>
<dbReference type="HAMAP" id="MF_01551">
    <property type="entry name" value="23SrRNA_methyltr_M"/>
    <property type="match status" value="1"/>
</dbReference>
<dbReference type="InterPro" id="IPR040739">
    <property type="entry name" value="RlmM_FDX"/>
</dbReference>
<dbReference type="InterPro" id="IPR048646">
    <property type="entry name" value="RlmM_THUMP-like"/>
</dbReference>
<dbReference type="InterPro" id="IPR002877">
    <property type="entry name" value="RNA_MeTrfase_FtsJ_dom"/>
</dbReference>
<dbReference type="InterPro" id="IPR011224">
    <property type="entry name" value="rRNA_MeTrfase_M"/>
</dbReference>
<dbReference type="InterPro" id="IPR029063">
    <property type="entry name" value="SAM-dependent_MTases_sf"/>
</dbReference>
<dbReference type="NCBIfam" id="NF008734">
    <property type="entry name" value="PRK11760.1"/>
    <property type="match status" value="1"/>
</dbReference>
<dbReference type="PANTHER" id="PTHR37524">
    <property type="entry name" value="RIBOSOMAL RNA LARGE SUBUNIT METHYLTRANSFERASE M"/>
    <property type="match status" value="1"/>
</dbReference>
<dbReference type="PANTHER" id="PTHR37524:SF2">
    <property type="entry name" value="RIBOSOMAL RNA METHYLTRANSFERASE FTSJ DOMAIN-CONTAINING PROTEIN"/>
    <property type="match status" value="1"/>
</dbReference>
<dbReference type="Pfam" id="PF01728">
    <property type="entry name" value="FtsJ"/>
    <property type="match status" value="1"/>
</dbReference>
<dbReference type="Pfam" id="PF18125">
    <property type="entry name" value="RlmM_FDX"/>
    <property type="match status" value="1"/>
</dbReference>
<dbReference type="Pfam" id="PF21239">
    <property type="entry name" value="RLMM_N"/>
    <property type="match status" value="1"/>
</dbReference>
<dbReference type="PIRSF" id="PIRSF028774">
    <property type="entry name" value="UCP028774"/>
    <property type="match status" value="1"/>
</dbReference>
<dbReference type="SUPFAM" id="SSF53335">
    <property type="entry name" value="S-adenosyl-L-methionine-dependent methyltransferases"/>
    <property type="match status" value="1"/>
</dbReference>
<sequence>MNKIALYCRPGFEKECAAEITDKAGQKEIYGFARVKDNSGYVLFECYQYEDADRLIREIPFRELIFARQMLVVGELLRDLPPEDRISPIVGMLHGVIERAGELRVEVPDTNESKELLKFCRKFTVPLRNAMRQEKILLIRENVNRPVIHVFFIAPGCCYVGYSYSNNNSPFYMGIPRLKFPSDAPSRSTLKLEEAFHVFIPHDEWEERLASGLYAVDLGACPGGWTYQLVKRSMMVHAVDNGTMSKSLMDTGQVKHHKVDGFKFEPSAKNIYWLVCDMVEKPAKVTQLMVDWLVNGWCREAIFNLKLPMKKRYEEVAHNLQKMHLQLKEGGINAQIQAKHLYHDREEITVHVRRIWSAYAASRNDY</sequence>
<comment type="function">
    <text evidence="1">Catalyzes the 2'-O-methylation at nucleotide C2498 in 23S rRNA.</text>
</comment>
<comment type="catalytic activity">
    <reaction evidence="1">
        <text>cytidine(2498) in 23S rRNA + S-adenosyl-L-methionine = 2'-O-methylcytidine(2498) in 23S rRNA + S-adenosyl-L-homocysteine + H(+)</text>
        <dbReference type="Rhea" id="RHEA:42788"/>
        <dbReference type="Rhea" id="RHEA-COMP:10244"/>
        <dbReference type="Rhea" id="RHEA-COMP:10245"/>
        <dbReference type="ChEBI" id="CHEBI:15378"/>
        <dbReference type="ChEBI" id="CHEBI:57856"/>
        <dbReference type="ChEBI" id="CHEBI:59789"/>
        <dbReference type="ChEBI" id="CHEBI:74495"/>
        <dbReference type="ChEBI" id="CHEBI:82748"/>
        <dbReference type="EC" id="2.1.1.186"/>
    </reaction>
</comment>
<comment type="subunit">
    <text evidence="1">Monomer.</text>
</comment>
<comment type="subcellular location">
    <subcellularLocation>
        <location evidence="1">Cytoplasm</location>
    </subcellularLocation>
</comment>
<comment type="similarity">
    <text evidence="1">Belongs to the class I-like SAM-binding methyltransferase superfamily. RNA methyltransferase RlmE family. RlmM subfamily.</text>
</comment>
<accession>Q7N8R4</accession>
<gene>
    <name evidence="1" type="primary">rlmM</name>
    <name type="ordered locus">plu0654</name>
</gene>
<reference key="1">
    <citation type="journal article" date="2003" name="Nat. Biotechnol.">
        <title>The genome sequence of the entomopathogenic bacterium Photorhabdus luminescens.</title>
        <authorList>
            <person name="Duchaud E."/>
            <person name="Rusniok C."/>
            <person name="Frangeul L."/>
            <person name="Buchrieser C."/>
            <person name="Givaudan A."/>
            <person name="Taourit S."/>
            <person name="Bocs S."/>
            <person name="Boursaux-Eude C."/>
            <person name="Chandler M."/>
            <person name="Charles J.-F."/>
            <person name="Dassa E."/>
            <person name="Derose R."/>
            <person name="Derzelle S."/>
            <person name="Freyssinet G."/>
            <person name="Gaudriault S."/>
            <person name="Medigue C."/>
            <person name="Lanois A."/>
            <person name="Powell K."/>
            <person name="Siguier P."/>
            <person name="Vincent R."/>
            <person name="Wingate V."/>
            <person name="Zouine M."/>
            <person name="Glaser P."/>
            <person name="Boemare N."/>
            <person name="Danchin A."/>
            <person name="Kunst F."/>
        </authorList>
    </citation>
    <scope>NUCLEOTIDE SEQUENCE [LARGE SCALE GENOMIC DNA]</scope>
    <source>
        <strain>DSM 15139 / CIP 105565 / TT01</strain>
    </source>
</reference>
<protein>
    <recommendedName>
        <fullName evidence="1">Ribosomal RNA large subunit methyltransferase M</fullName>
        <ecNumber evidence="1">2.1.1.186</ecNumber>
    </recommendedName>
    <alternativeName>
        <fullName evidence="1">23S rRNA (cytidine2498-2'-O)-methyltransferase</fullName>
    </alternativeName>
    <alternativeName>
        <fullName evidence="1">23S rRNA 2'-O-ribose methyltransferase RlmM</fullName>
    </alternativeName>
</protein>
<evidence type="ECO:0000255" key="1">
    <source>
        <dbReference type="HAMAP-Rule" id="MF_01551"/>
    </source>
</evidence>
<organism>
    <name type="scientific">Photorhabdus laumondii subsp. laumondii (strain DSM 15139 / CIP 105565 / TT01)</name>
    <name type="common">Photorhabdus luminescens subsp. laumondii</name>
    <dbReference type="NCBI Taxonomy" id="243265"/>
    <lineage>
        <taxon>Bacteria</taxon>
        <taxon>Pseudomonadati</taxon>
        <taxon>Pseudomonadota</taxon>
        <taxon>Gammaproteobacteria</taxon>
        <taxon>Enterobacterales</taxon>
        <taxon>Morganellaceae</taxon>
        <taxon>Photorhabdus</taxon>
    </lineage>
</organism>
<keyword id="KW-0963">Cytoplasm</keyword>
<keyword id="KW-0489">Methyltransferase</keyword>
<keyword id="KW-1185">Reference proteome</keyword>
<keyword id="KW-0698">rRNA processing</keyword>
<keyword id="KW-0949">S-adenosyl-L-methionine</keyword>
<keyword id="KW-0808">Transferase</keyword>
<proteinExistence type="inferred from homology"/>
<feature type="chain" id="PRO_0000070413" description="Ribosomal RNA large subunit methyltransferase M">
    <location>
        <begin position="1"/>
        <end position="366"/>
    </location>
</feature>
<feature type="active site" description="Proton acceptor" evidence="1">
    <location>
        <position position="306"/>
    </location>
</feature>
<feature type="binding site" evidence="1">
    <location>
        <position position="188"/>
    </location>
    <ligand>
        <name>S-adenosyl-L-methionine</name>
        <dbReference type="ChEBI" id="CHEBI:59789"/>
    </ligand>
</feature>
<feature type="binding site" evidence="1">
    <location>
        <begin position="221"/>
        <end position="224"/>
    </location>
    <ligand>
        <name>S-adenosyl-L-methionine</name>
        <dbReference type="ChEBI" id="CHEBI:59789"/>
    </ligand>
</feature>
<feature type="binding site" evidence="1">
    <location>
        <position position="240"/>
    </location>
    <ligand>
        <name>S-adenosyl-L-methionine</name>
        <dbReference type="ChEBI" id="CHEBI:59789"/>
    </ligand>
</feature>
<feature type="binding site" evidence="1">
    <location>
        <position position="260"/>
    </location>
    <ligand>
        <name>S-adenosyl-L-methionine</name>
        <dbReference type="ChEBI" id="CHEBI:59789"/>
    </ligand>
</feature>
<feature type="binding site" evidence="1">
    <location>
        <position position="277"/>
    </location>
    <ligand>
        <name>S-adenosyl-L-methionine</name>
        <dbReference type="ChEBI" id="CHEBI:59789"/>
    </ligand>
</feature>
<name>RLMM_PHOLL</name>